<keyword id="KW-0004">4Fe-4S</keyword>
<keyword id="KW-0150">Chloroplast</keyword>
<keyword id="KW-0249">Electron transport</keyword>
<keyword id="KW-0408">Iron</keyword>
<keyword id="KW-0411">Iron-sulfur</keyword>
<keyword id="KW-0472">Membrane</keyword>
<keyword id="KW-0479">Metal-binding</keyword>
<keyword id="KW-0560">Oxidoreductase</keyword>
<keyword id="KW-0602">Photosynthesis</keyword>
<keyword id="KW-0603">Photosystem I</keyword>
<keyword id="KW-0934">Plastid</keyword>
<keyword id="KW-0677">Repeat</keyword>
<keyword id="KW-0793">Thylakoid</keyword>
<keyword id="KW-0813">Transport</keyword>
<comment type="function">
    <text evidence="2">Apoprotein for the two 4Fe-4S centers FA and FB of photosystem I (PSI); essential for photochemical activity. FB is the terminal electron acceptor of PSI, donating electrons to ferredoxin. The C-terminus interacts with PsaA/B/D and helps assemble the protein into the PSI complex. Required for binding of PsaD and PsaE to PSI. PSI is a plastocyanin-ferredoxin oxidoreductase, converting photonic excitation into a charge separation, which transfers an electron from the donor P700 chlorophyll pair to the spectroscopically characterized acceptors A0, A1, FX, FA and FB in turn.</text>
</comment>
<comment type="catalytic activity">
    <reaction evidence="2">
        <text>reduced [plastocyanin] + hnu + oxidized [2Fe-2S]-[ferredoxin] = oxidized [plastocyanin] + reduced [2Fe-2S]-[ferredoxin]</text>
        <dbReference type="Rhea" id="RHEA:30407"/>
        <dbReference type="Rhea" id="RHEA-COMP:10000"/>
        <dbReference type="Rhea" id="RHEA-COMP:10001"/>
        <dbReference type="Rhea" id="RHEA-COMP:10039"/>
        <dbReference type="Rhea" id="RHEA-COMP:10040"/>
        <dbReference type="ChEBI" id="CHEBI:29036"/>
        <dbReference type="ChEBI" id="CHEBI:30212"/>
        <dbReference type="ChEBI" id="CHEBI:33737"/>
        <dbReference type="ChEBI" id="CHEBI:33738"/>
        <dbReference type="ChEBI" id="CHEBI:49552"/>
        <dbReference type="EC" id="1.97.1.12"/>
    </reaction>
</comment>
<comment type="cofactor">
    <cofactor evidence="2">
        <name>[4Fe-4S] cluster</name>
        <dbReference type="ChEBI" id="CHEBI:49883"/>
    </cofactor>
    <text evidence="2">Binds 2 [4Fe-4S] clusters. Cluster 2 is most probably the spectroscopically characterized electron acceptor FA and cluster 1 is most probably FB.</text>
</comment>
<comment type="subunit">
    <text evidence="2">The eukaryotic PSI reaction center is composed of at least 11 subunits.</text>
</comment>
<comment type="subcellular location">
    <subcellularLocation>
        <location evidence="2">Plastid</location>
        <location evidence="2">Chloroplast thylakoid membrane</location>
        <topology evidence="2">Peripheral membrane protein</topology>
        <orientation evidence="2">Stromal side</orientation>
    </subcellularLocation>
</comment>
<reference key="1">
    <citation type="journal article" date="2006" name="BMC Plant Biol.">
        <title>Rapid and accurate pyrosequencing of angiosperm plastid genomes.</title>
        <authorList>
            <person name="Moore M.J."/>
            <person name="Dhingra A."/>
            <person name="Soltis P.S."/>
            <person name="Shaw R."/>
            <person name="Farmerie W.G."/>
            <person name="Folta K.M."/>
            <person name="Soltis D.E."/>
        </authorList>
    </citation>
    <scope>NUCLEOTIDE SEQUENCE [LARGE SCALE GENOMIC DNA]</scope>
</reference>
<gene>
    <name evidence="2" type="primary">psaC</name>
</gene>
<name>PSAC_PLAOC</name>
<accession>Q09FZ5</accession>
<protein>
    <recommendedName>
        <fullName evidence="2">Photosystem I iron-sulfur center</fullName>
        <ecNumber evidence="2">1.97.1.12</ecNumber>
    </recommendedName>
    <alternativeName>
        <fullName evidence="2">9 kDa polypeptide</fullName>
    </alternativeName>
    <alternativeName>
        <fullName evidence="2">PSI-C</fullName>
    </alternativeName>
    <alternativeName>
        <fullName evidence="2">Photosystem I subunit VII</fullName>
    </alternativeName>
    <alternativeName>
        <fullName evidence="2">PsaC</fullName>
    </alternativeName>
</protein>
<feature type="initiator methionine" description="Removed" evidence="1">
    <location>
        <position position="1"/>
    </location>
</feature>
<feature type="chain" id="PRO_0000292127" description="Photosystem I iron-sulfur center">
    <location>
        <begin position="2"/>
        <end position="81"/>
    </location>
</feature>
<feature type="domain" description="4Fe-4S ferredoxin-type 1" evidence="2">
    <location>
        <begin position="2"/>
        <end position="31"/>
    </location>
</feature>
<feature type="domain" description="4Fe-4S ferredoxin-type 2" evidence="2">
    <location>
        <begin position="39"/>
        <end position="68"/>
    </location>
</feature>
<feature type="binding site" evidence="2">
    <location>
        <position position="11"/>
    </location>
    <ligand>
        <name>[4Fe-4S] cluster</name>
        <dbReference type="ChEBI" id="CHEBI:49883"/>
        <label>1</label>
    </ligand>
</feature>
<feature type="binding site" evidence="2">
    <location>
        <position position="14"/>
    </location>
    <ligand>
        <name>[4Fe-4S] cluster</name>
        <dbReference type="ChEBI" id="CHEBI:49883"/>
        <label>1</label>
    </ligand>
</feature>
<feature type="binding site" evidence="2">
    <location>
        <position position="17"/>
    </location>
    <ligand>
        <name>[4Fe-4S] cluster</name>
        <dbReference type="ChEBI" id="CHEBI:49883"/>
        <label>1</label>
    </ligand>
</feature>
<feature type="binding site" evidence="2">
    <location>
        <position position="21"/>
    </location>
    <ligand>
        <name>[4Fe-4S] cluster</name>
        <dbReference type="ChEBI" id="CHEBI:49883"/>
        <label>2</label>
    </ligand>
</feature>
<feature type="binding site" evidence="2">
    <location>
        <position position="48"/>
    </location>
    <ligand>
        <name>[4Fe-4S] cluster</name>
        <dbReference type="ChEBI" id="CHEBI:49883"/>
        <label>2</label>
    </ligand>
</feature>
<feature type="binding site" evidence="2">
    <location>
        <position position="51"/>
    </location>
    <ligand>
        <name>[4Fe-4S] cluster</name>
        <dbReference type="ChEBI" id="CHEBI:49883"/>
        <label>2</label>
    </ligand>
</feature>
<feature type="binding site" evidence="2">
    <location>
        <position position="54"/>
    </location>
    <ligand>
        <name>[4Fe-4S] cluster</name>
        <dbReference type="ChEBI" id="CHEBI:49883"/>
        <label>2</label>
    </ligand>
</feature>
<feature type="binding site" evidence="2">
    <location>
        <position position="58"/>
    </location>
    <ligand>
        <name>[4Fe-4S] cluster</name>
        <dbReference type="ChEBI" id="CHEBI:49883"/>
        <label>1</label>
    </ligand>
</feature>
<sequence>MSHSVKIYDTCIGCTQCVRACPTDVLEMIPWDGCKAKQIASAPRTEDCVGCKRCESACPTDFLSVRVYLWHETTRSMGLAY</sequence>
<geneLocation type="chloroplast"/>
<evidence type="ECO:0000250" key="1"/>
<evidence type="ECO:0000255" key="2">
    <source>
        <dbReference type="HAMAP-Rule" id="MF_01303"/>
    </source>
</evidence>
<proteinExistence type="inferred from homology"/>
<dbReference type="EC" id="1.97.1.12" evidence="2"/>
<dbReference type="EMBL" id="DQ923116">
    <property type="protein sequence ID" value="ABI49830.1"/>
    <property type="molecule type" value="Genomic_DNA"/>
</dbReference>
<dbReference type="RefSeq" id="YP_740616.1">
    <property type="nucleotide sequence ID" value="NC_008335.1"/>
</dbReference>
<dbReference type="SMR" id="Q09FZ5"/>
<dbReference type="GeneID" id="4271355"/>
<dbReference type="GO" id="GO:0009535">
    <property type="term" value="C:chloroplast thylakoid membrane"/>
    <property type="evidence" value="ECO:0007669"/>
    <property type="project" value="UniProtKB-SubCell"/>
</dbReference>
<dbReference type="GO" id="GO:0009522">
    <property type="term" value="C:photosystem I"/>
    <property type="evidence" value="ECO:0007669"/>
    <property type="project" value="UniProtKB-KW"/>
</dbReference>
<dbReference type="GO" id="GO:0051539">
    <property type="term" value="F:4 iron, 4 sulfur cluster binding"/>
    <property type="evidence" value="ECO:0007669"/>
    <property type="project" value="UniProtKB-KW"/>
</dbReference>
<dbReference type="GO" id="GO:0009055">
    <property type="term" value="F:electron transfer activity"/>
    <property type="evidence" value="ECO:0007669"/>
    <property type="project" value="UniProtKB-UniRule"/>
</dbReference>
<dbReference type="GO" id="GO:0046872">
    <property type="term" value="F:metal ion binding"/>
    <property type="evidence" value="ECO:0007669"/>
    <property type="project" value="UniProtKB-KW"/>
</dbReference>
<dbReference type="GO" id="GO:0016491">
    <property type="term" value="F:oxidoreductase activity"/>
    <property type="evidence" value="ECO:0007669"/>
    <property type="project" value="UniProtKB-KW"/>
</dbReference>
<dbReference type="GO" id="GO:0009773">
    <property type="term" value="P:photosynthetic electron transport in photosystem I"/>
    <property type="evidence" value="ECO:0007669"/>
    <property type="project" value="InterPro"/>
</dbReference>
<dbReference type="FunFam" id="3.30.70.20:FF:000001">
    <property type="entry name" value="Photosystem I iron-sulfur center"/>
    <property type="match status" value="1"/>
</dbReference>
<dbReference type="Gene3D" id="3.30.70.20">
    <property type="match status" value="1"/>
</dbReference>
<dbReference type="HAMAP" id="MF_01303">
    <property type="entry name" value="PSI_PsaC"/>
    <property type="match status" value="1"/>
</dbReference>
<dbReference type="InterPro" id="IPR017896">
    <property type="entry name" value="4Fe4S_Fe-S-bd"/>
</dbReference>
<dbReference type="InterPro" id="IPR017900">
    <property type="entry name" value="4Fe4S_Fe_S_CS"/>
</dbReference>
<dbReference type="InterPro" id="IPR050157">
    <property type="entry name" value="PSI_iron-sulfur_center"/>
</dbReference>
<dbReference type="InterPro" id="IPR017491">
    <property type="entry name" value="PSI_PsaC"/>
</dbReference>
<dbReference type="NCBIfam" id="TIGR03048">
    <property type="entry name" value="PS_I_psaC"/>
    <property type="match status" value="1"/>
</dbReference>
<dbReference type="PANTHER" id="PTHR24960:SF79">
    <property type="entry name" value="PHOTOSYSTEM I IRON-SULFUR CENTER"/>
    <property type="match status" value="1"/>
</dbReference>
<dbReference type="PANTHER" id="PTHR24960">
    <property type="entry name" value="PHOTOSYSTEM I IRON-SULFUR CENTER-RELATED"/>
    <property type="match status" value="1"/>
</dbReference>
<dbReference type="Pfam" id="PF14697">
    <property type="entry name" value="Fer4_21"/>
    <property type="match status" value="1"/>
</dbReference>
<dbReference type="SUPFAM" id="SSF54862">
    <property type="entry name" value="4Fe-4S ferredoxins"/>
    <property type="match status" value="1"/>
</dbReference>
<dbReference type="PROSITE" id="PS00198">
    <property type="entry name" value="4FE4S_FER_1"/>
    <property type="match status" value="2"/>
</dbReference>
<dbReference type="PROSITE" id="PS51379">
    <property type="entry name" value="4FE4S_FER_2"/>
    <property type="match status" value="2"/>
</dbReference>
<organism>
    <name type="scientific">Platanus occidentalis</name>
    <name type="common">Sycamore</name>
    <name type="synonym">American plane tree</name>
    <dbReference type="NCBI Taxonomy" id="4403"/>
    <lineage>
        <taxon>Eukaryota</taxon>
        <taxon>Viridiplantae</taxon>
        <taxon>Streptophyta</taxon>
        <taxon>Embryophyta</taxon>
        <taxon>Tracheophyta</taxon>
        <taxon>Spermatophyta</taxon>
        <taxon>Magnoliopsida</taxon>
        <taxon>Proteales</taxon>
        <taxon>Platanaceae</taxon>
        <taxon>Platanus</taxon>
    </lineage>
</organism>